<accession>Q2YQZ4</accession>
<feature type="chain" id="PRO_1000012707" description="ATP-dependent protease ATPase subunit HslU">
    <location>
        <begin position="1"/>
        <end position="434"/>
    </location>
</feature>
<feature type="binding site" evidence="1">
    <location>
        <position position="18"/>
    </location>
    <ligand>
        <name>ATP</name>
        <dbReference type="ChEBI" id="CHEBI:30616"/>
    </ligand>
</feature>
<feature type="binding site" evidence="1">
    <location>
        <begin position="60"/>
        <end position="65"/>
    </location>
    <ligand>
        <name>ATP</name>
        <dbReference type="ChEBI" id="CHEBI:30616"/>
    </ligand>
</feature>
<feature type="binding site" evidence="1">
    <location>
        <position position="247"/>
    </location>
    <ligand>
        <name>ATP</name>
        <dbReference type="ChEBI" id="CHEBI:30616"/>
    </ligand>
</feature>
<feature type="binding site" evidence="1">
    <location>
        <position position="312"/>
    </location>
    <ligand>
        <name>ATP</name>
        <dbReference type="ChEBI" id="CHEBI:30616"/>
    </ligand>
</feature>
<feature type="binding site" evidence="1">
    <location>
        <position position="384"/>
    </location>
    <ligand>
        <name>ATP</name>
        <dbReference type="ChEBI" id="CHEBI:30616"/>
    </ligand>
</feature>
<feature type="helix" evidence="2">
    <location>
        <begin position="6"/>
        <end position="14"/>
    </location>
</feature>
<feature type="helix" evidence="2">
    <location>
        <begin position="21"/>
        <end position="39"/>
    </location>
</feature>
<feature type="helix" evidence="2">
    <location>
        <begin position="44"/>
        <end position="46"/>
    </location>
</feature>
<feature type="strand" evidence="2">
    <location>
        <begin position="53"/>
        <end position="56"/>
    </location>
</feature>
<feature type="helix" evidence="2">
    <location>
        <begin position="63"/>
        <end position="73"/>
    </location>
</feature>
<feature type="strand" evidence="2">
    <location>
        <begin position="78"/>
        <end position="82"/>
    </location>
</feature>
<feature type="helix" evidence="2">
    <location>
        <begin position="83"/>
        <end position="87"/>
    </location>
</feature>
<feature type="strand" evidence="2">
    <location>
        <begin position="91"/>
        <end position="93"/>
    </location>
</feature>
<feature type="helix" evidence="2">
    <location>
        <begin position="97"/>
        <end position="116"/>
    </location>
</feature>
<feature type="helix" evidence="2">
    <location>
        <begin position="228"/>
        <end position="241"/>
    </location>
</feature>
<feature type="strand" evidence="2">
    <location>
        <begin position="243"/>
        <end position="247"/>
    </location>
</feature>
<feature type="turn" evidence="2">
    <location>
        <begin position="248"/>
        <end position="250"/>
    </location>
</feature>
<feature type="helix" evidence="2">
    <location>
        <begin position="251"/>
        <end position="253"/>
    </location>
</feature>
<feature type="strand" evidence="2">
    <location>
        <begin position="261"/>
        <end position="263"/>
    </location>
</feature>
<feature type="helix" evidence="2">
    <location>
        <begin position="265"/>
        <end position="277"/>
    </location>
</feature>
<feature type="strand" evidence="2">
    <location>
        <begin position="294"/>
        <end position="299"/>
    </location>
</feature>
<feature type="strand" evidence="2">
    <location>
        <begin position="302"/>
        <end position="304"/>
    </location>
</feature>
<feature type="helix" evidence="2">
    <location>
        <begin position="306"/>
        <end position="308"/>
    </location>
</feature>
<feature type="helix" evidence="2">
    <location>
        <begin position="311"/>
        <end position="315"/>
    </location>
</feature>
<feature type="strand" evidence="2">
    <location>
        <begin position="319"/>
        <end position="322"/>
    </location>
</feature>
<feature type="helix" evidence="2">
    <location>
        <begin position="328"/>
        <end position="336"/>
    </location>
</feature>
<feature type="helix" evidence="2">
    <location>
        <begin position="342"/>
        <end position="351"/>
    </location>
</feature>
<feature type="turn" evidence="2">
    <location>
        <begin position="352"/>
        <end position="354"/>
    </location>
</feature>
<feature type="strand" evidence="2">
    <location>
        <begin position="356"/>
        <end position="359"/>
    </location>
</feature>
<feature type="helix" evidence="2">
    <location>
        <begin position="361"/>
        <end position="377"/>
    </location>
</feature>
<feature type="helix" evidence="2">
    <location>
        <begin position="384"/>
        <end position="393"/>
    </location>
</feature>
<feature type="helix" evidence="2">
    <location>
        <begin position="395"/>
        <end position="400"/>
    </location>
</feature>
<feature type="helix" evidence="2">
    <location>
        <begin position="401"/>
        <end position="404"/>
    </location>
</feature>
<feature type="strand" evidence="2">
    <location>
        <begin position="408"/>
        <end position="411"/>
    </location>
</feature>
<feature type="helix" evidence="2">
    <location>
        <begin position="413"/>
        <end position="418"/>
    </location>
</feature>
<protein>
    <recommendedName>
        <fullName evidence="1">ATP-dependent protease ATPase subunit HslU</fullName>
    </recommendedName>
    <alternativeName>
        <fullName evidence="1">Unfoldase HslU</fullName>
    </alternativeName>
</protein>
<organism>
    <name type="scientific">Brucella abortus (strain 2308)</name>
    <dbReference type="NCBI Taxonomy" id="359391"/>
    <lineage>
        <taxon>Bacteria</taxon>
        <taxon>Pseudomonadati</taxon>
        <taxon>Pseudomonadota</taxon>
        <taxon>Alphaproteobacteria</taxon>
        <taxon>Hyphomicrobiales</taxon>
        <taxon>Brucellaceae</taxon>
        <taxon>Brucella/Ochrobactrum group</taxon>
        <taxon>Brucella</taxon>
    </lineage>
</organism>
<proteinExistence type="evidence at protein level"/>
<name>HSLU_BRUA2</name>
<reference key="1">
    <citation type="journal article" date="2005" name="Infect. Immun.">
        <title>Whole-genome analyses of speciation events in pathogenic Brucellae.</title>
        <authorList>
            <person name="Chain P.S."/>
            <person name="Comerci D.J."/>
            <person name="Tolmasky M.E."/>
            <person name="Larimer F.W."/>
            <person name="Malfatti S.A."/>
            <person name="Vergez L.M."/>
            <person name="Aguero F."/>
            <person name="Land M.L."/>
            <person name="Ugalde R.A."/>
            <person name="Garcia E."/>
        </authorList>
    </citation>
    <scope>NUCLEOTIDE SEQUENCE [LARGE SCALE GENOMIC DNA]</scope>
    <source>
        <strain>2308</strain>
    </source>
</reference>
<sequence length="434" mass="47939">MSNFSPREIVSELDRFIIGQKDAKRAVAIALRNRWRRQQLEGQMREEVMPKNILMIGPTGVGKTEISRRLAKLAGAPFVKVEATKFTEVGYVGRDVEQIIRDLVEIAITLVREKRREDVKAKAHLNAEERVLDALVGKTASPATRDSFRKKLRNGEMDDKEIEIEVSDSGASPNFEIPGMPGANIGVLNISDMLGKAMGGRTKTRKTTVKDSYPILINDESDKLLDQDQIVQEALRVSEDEGIVFIDEIDKIAAREGGSGAGVSREGVQRDLLPLVEGTTVATKYGPVKTDHILFITSGAFHVSKPSDLLPELQGRLPIRVELSALTREDFRRILTETEASLIKQYIALMETEEVKLEFSDDAIDALADIAVDLNATVENIGARRLQTVIEKVLDEISFTAPDKAGATFIIDAAYVKEKIGGLAKNTDLSRFIL</sequence>
<keyword id="KW-0002">3D-structure</keyword>
<keyword id="KW-0067">ATP-binding</keyword>
<keyword id="KW-0143">Chaperone</keyword>
<keyword id="KW-0963">Cytoplasm</keyword>
<keyword id="KW-0547">Nucleotide-binding</keyword>
<keyword id="KW-1185">Reference proteome</keyword>
<keyword id="KW-0346">Stress response</keyword>
<evidence type="ECO:0000255" key="1">
    <source>
        <dbReference type="HAMAP-Rule" id="MF_00249"/>
    </source>
</evidence>
<evidence type="ECO:0007829" key="2">
    <source>
        <dbReference type="PDB" id="7MHB"/>
    </source>
</evidence>
<comment type="function">
    <text evidence="1">ATPase subunit of a proteasome-like degradation complex; this subunit has chaperone activity. The binding of ATP and its subsequent hydrolysis by HslU are essential for unfolding of protein substrates subsequently hydrolyzed by HslV. HslU recognizes the N-terminal part of its protein substrates and unfolds these before they are guided to HslV for hydrolysis.</text>
</comment>
<comment type="subunit">
    <text evidence="1">A double ring-shaped homohexamer of HslV is capped on each side by a ring-shaped HslU homohexamer. The assembly of the HslU/HslV complex is dependent on binding of ATP.</text>
</comment>
<comment type="subcellular location">
    <subcellularLocation>
        <location evidence="1">Cytoplasm</location>
    </subcellularLocation>
</comment>
<comment type="similarity">
    <text evidence="1">Belongs to the ClpX chaperone family. HslU subfamily.</text>
</comment>
<dbReference type="EMBL" id="AM040264">
    <property type="protein sequence ID" value="CAJ12036.1"/>
    <property type="molecule type" value="Genomic_DNA"/>
</dbReference>
<dbReference type="RefSeq" id="WP_002967032.1">
    <property type="nucleotide sequence ID" value="NZ_KN046823.1"/>
</dbReference>
<dbReference type="PDB" id="7MHB">
    <property type="method" value="X-ray"/>
    <property type="resolution" value="2.60 A"/>
    <property type="chains" value="A/B=3-418"/>
</dbReference>
<dbReference type="PDBsum" id="7MHB"/>
<dbReference type="SMR" id="Q2YQZ4"/>
<dbReference type="STRING" id="359391.BAB1_2080"/>
<dbReference type="GeneID" id="93017610"/>
<dbReference type="KEGG" id="bmf:BAB1_2080"/>
<dbReference type="PATRIC" id="fig|359391.11.peg.1314"/>
<dbReference type="HOGENOM" id="CLU_033123_0_0_5"/>
<dbReference type="PhylomeDB" id="Q2YQZ4"/>
<dbReference type="Proteomes" id="UP000002719">
    <property type="component" value="Chromosome I"/>
</dbReference>
<dbReference type="GO" id="GO:0009376">
    <property type="term" value="C:HslUV protease complex"/>
    <property type="evidence" value="ECO:0007669"/>
    <property type="project" value="UniProtKB-UniRule"/>
</dbReference>
<dbReference type="GO" id="GO:0005524">
    <property type="term" value="F:ATP binding"/>
    <property type="evidence" value="ECO:0007669"/>
    <property type="project" value="UniProtKB-UniRule"/>
</dbReference>
<dbReference type="GO" id="GO:0016887">
    <property type="term" value="F:ATP hydrolysis activity"/>
    <property type="evidence" value="ECO:0007669"/>
    <property type="project" value="InterPro"/>
</dbReference>
<dbReference type="GO" id="GO:0008233">
    <property type="term" value="F:peptidase activity"/>
    <property type="evidence" value="ECO:0007669"/>
    <property type="project" value="InterPro"/>
</dbReference>
<dbReference type="GO" id="GO:0036402">
    <property type="term" value="F:proteasome-activating activity"/>
    <property type="evidence" value="ECO:0007669"/>
    <property type="project" value="UniProtKB-UniRule"/>
</dbReference>
<dbReference type="GO" id="GO:0043335">
    <property type="term" value="P:protein unfolding"/>
    <property type="evidence" value="ECO:0007669"/>
    <property type="project" value="UniProtKB-UniRule"/>
</dbReference>
<dbReference type="GO" id="GO:0051603">
    <property type="term" value="P:proteolysis involved in protein catabolic process"/>
    <property type="evidence" value="ECO:0007669"/>
    <property type="project" value="TreeGrafter"/>
</dbReference>
<dbReference type="CDD" id="cd19498">
    <property type="entry name" value="RecA-like_HslU"/>
    <property type="match status" value="1"/>
</dbReference>
<dbReference type="FunFam" id="3.40.50.300:FF:000213">
    <property type="entry name" value="ATP-dependent protease ATPase subunit HslU"/>
    <property type="match status" value="1"/>
</dbReference>
<dbReference type="FunFam" id="3.40.50.300:FF:000220">
    <property type="entry name" value="ATP-dependent protease ATPase subunit HslU"/>
    <property type="match status" value="1"/>
</dbReference>
<dbReference type="Gene3D" id="1.10.8.60">
    <property type="match status" value="1"/>
</dbReference>
<dbReference type="Gene3D" id="1.10.8.10">
    <property type="entry name" value="DNA helicase RuvA subunit, C-terminal domain"/>
    <property type="match status" value="1"/>
</dbReference>
<dbReference type="Gene3D" id="3.40.50.300">
    <property type="entry name" value="P-loop containing nucleotide triphosphate hydrolases"/>
    <property type="match status" value="1"/>
</dbReference>
<dbReference type="HAMAP" id="MF_00249">
    <property type="entry name" value="HslU"/>
    <property type="match status" value="1"/>
</dbReference>
<dbReference type="InterPro" id="IPR003593">
    <property type="entry name" value="AAA+_ATPase"/>
</dbReference>
<dbReference type="InterPro" id="IPR050052">
    <property type="entry name" value="ATP-dep_Clp_protease_ClpX"/>
</dbReference>
<dbReference type="InterPro" id="IPR003959">
    <property type="entry name" value="ATPase_AAA_core"/>
</dbReference>
<dbReference type="InterPro" id="IPR019489">
    <property type="entry name" value="Clp_ATPase_C"/>
</dbReference>
<dbReference type="InterPro" id="IPR004491">
    <property type="entry name" value="HslU"/>
</dbReference>
<dbReference type="InterPro" id="IPR027417">
    <property type="entry name" value="P-loop_NTPase"/>
</dbReference>
<dbReference type="NCBIfam" id="TIGR00390">
    <property type="entry name" value="hslU"/>
    <property type="match status" value="1"/>
</dbReference>
<dbReference type="NCBIfam" id="NF003544">
    <property type="entry name" value="PRK05201.1"/>
    <property type="match status" value="1"/>
</dbReference>
<dbReference type="PANTHER" id="PTHR48102">
    <property type="entry name" value="ATP-DEPENDENT CLP PROTEASE ATP-BINDING SUBUNIT CLPX-LIKE, MITOCHONDRIAL-RELATED"/>
    <property type="match status" value="1"/>
</dbReference>
<dbReference type="PANTHER" id="PTHR48102:SF3">
    <property type="entry name" value="ATP-DEPENDENT PROTEASE ATPASE SUBUNIT HSLU"/>
    <property type="match status" value="1"/>
</dbReference>
<dbReference type="Pfam" id="PF00004">
    <property type="entry name" value="AAA"/>
    <property type="match status" value="1"/>
</dbReference>
<dbReference type="Pfam" id="PF07724">
    <property type="entry name" value="AAA_2"/>
    <property type="match status" value="1"/>
</dbReference>
<dbReference type="Pfam" id="PF10431">
    <property type="entry name" value="ClpB_D2-small"/>
    <property type="match status" value="1"/>
</dbReference>
<dbReference type="SMART" id="SM00382">
    <property type="entry name" value="AAA"/>
    <property type="match status" value="1"/>
</dbReference>
<dbReference type="SMART" id="SM01086">
    <property type="entry name" value="ClpB_D2-small"/>
    <property type="match status" value="1"/>
</dbReference>
<dbReference type="SUPFAM" id="SSF52540">
    <property type="entry name" value="P-loop containing nucleoside triphosphate hydrolases"/>
    <property type="match status" value="1"/>
</dbReference>
<gene>
    <name evidence="1" type="primary">hslU</name>
    <name type="ordered locus">BAB1_2080</name>
</gene>